<dbReference type="EC" id="6.1.1.14" evidence="1"/>
<dbReference type="EMBL" id="FM204883">
    <property type="protein sequence ID" value="CAW92790.1"/>
    <property type="molecule type" value="Genomic_DNA"/>
</dbReference>
<dbReference type="RefSeq" id="WP_012679118.1">
    <property type="nucleotide sequence ID" value="NC_012471.1"/>
</dbReference>
<dbReference type="SMR" id="C0M953"/>
<dbReference type="KEGG" id="seu:SEQ_0543"/>
<dbReference type="HOGENOM" id="CLU_057066_1_0_9"/>
<dbReference type="OrthoDB" id="9802183at2"/>
<dbReference type="Proteomes" id="UP000001365">
    <property type="component" value="Chromosome"/>
</dbReference>
<dbReference type="GO" id="GO:0005829">
    <property type="term" value="C:cytosol"/>
    <property type="evidence" value="ECO:0007669"/>
    <property type="project" value="TreeGrafter"/>
</dbReference>
<dbReference type="GO" id="GO:0005524">
    <property type="term" value="F:ATP binding"/>
    <property type="evidence" value="ECO:0007669"/>
    <property type="project" value="UniProtKB-UniRule"/>
</dbReference>
<dbReference type="GO" id="GO:0140096">
    <property type="term" value="F:catalytic activity, acting on a protein"/>
    <property type="evidence" value="ECO:0007669"/>
    <property type="project" value="UniProtKB-ARBA"/>
</dbReference>
<dbReference type="GO" id="GO:0004820">
    <property type="term" value="F:glycine-tRNA ligase activity"/>
    <property type="evidence" value="ECO:0007669"/>
    <property type="project" value="UniProtKB-UniRule"/>
</dbReference>
<dbReference type="GO" id="GO:0016740">
    <property type="term" value="F:transferase activity"/>
    <property type="evidence" value="ECO:0007669"/>
    <property type="project" value="UniProtKB-ARBA"/>
</dbReference>
<dbReference type="GO" id="GO:0006426">
    <property type="term" value="P:glycyl-tRNA aminoacylation"/>
    <property type="evidence" value="ECO:0007669"/>
    <property type="project" value="UniProtKB-UniRule"/>
</dbReference>
<dbReference type="CDD" id="cd00733">
    <property type="entry name" value="GlyRS_alpha_core"/>
    <property type="match status" value="1"/>
</dbReference>
<dbReference type="FunFam" id="3.30.930.10:FF:000006">
    <property type="entry name" value="Glycine--tRNA ligase alpha subunit"/>
    <property type="match status" value="1"/>
</dbReference>
<dbReference type="Gene3D" id="3.30.930.10">
    <property type="entry name" value="Bira Bifunctional Protein, Domain 2"/>
    <property type="match status" value="1"/>
</dbReference>
<dbReference type="Gene3D" id="1.20.58.180">
    <property type="entry name" value="Class II aaRS and biotin synthetases, domain 2"/>
    <property type="match status" value="1"/>
</dbReference>
<dbReference type="HAMAP" id="MF_00254">
    <property type="entry name" value="Gly_tRNA_synth_alpha"/>
    <property type="match status" value="1"/>
</dbReference>
<dbReference type="InterPro" id="IPR045864">
    <property type="entry name" value="aa-tRNA-synth_II/BPL/LPL"/>
</dbReference>
<dbReference type="InterPro" id="IPR006194">
    <property type="entry name" value="Gly-tRNA-synth_heterodimer"/>
</dbReference>
<dbReference type="InterPro" id="IPR002310">
    <property type="entry name" value="Gly-tRNA_ligase_asu"/>
</dbReference>
<dbReference type="NCBIfam" id="TIGR00388">
    <property type="entry name" value="glyQ"/>
    <property type="match status" value="1"/>
</dbReference>
<dbReference type="NCBIfam" id="NF006827">
    <property type="entry name" value="PRK09348.1"/>
    <property type="match status" value="1"/>
</dbReference>
<dbReference type="PANTHER" id="PTHR30075:SF2">
    <property type="entry name" value="GLYCINE--TRNA LIGASE, CHLOROPLASTIC_MITOCHONDRIAL 2"/>
    <property type="match status" value="1"/>
</dbReference>
<dbReference type="PANTHER" id="PTHR30075">
    <property type="entry name" value="GLYCYL-TRNA SYNTHETASE"/>
    <property type="match status" value="1"/>
</dbReference>
<dbReference type="Pfam" id="PF02091">
    <property type="entry name" value="tRNA-synt_2e"/>
    <property type="match status" value="1"/>
</dbReference>
<dbReference type="PRINTS" id="PR01044">
    <property type="entry name" value="TRNASYNTHGA"/>
</dbReference>
<dbReference type="SUPFAM" id="SSF55681">
    <property type="entry name" value="Class II aaRS and biotin synthetases"/>
    <property type="match status" value="1"/>
</dbReference>
<dbReference type="PROSITE" id="PS50861">
    <property type="entry name" value="AA_TRNA_LIGASE_II_GLYAB"/>
    <property type="match status" value="1"/>
</dbReference>
<keyword id="KW-0030">Aminoacyl-tRNA synthetase</keyword>
<keyword id="KW-0067">ATP-binding</keyword>
<keyword id="KW-0963">Cytoplasm</keyword>
<keyword id="KW-0436">Ligase</keyword>
<keyword id="KW-0547">Nucleotide-binding</keyword>
<keyword id="KW-0648">Protein biosynthesis</keyword>
<proteinExistence type="inferred from homology"/>
<sequence length="303" mass="34583">MSNKLTFQEIILTLQQYWNDQGCMLMQAYDNEKGAGTMSPYTFLRAIGPEPWNAAYVEPSRRPADGRYGENPNRLYQHHQFQVVMKPSPSNIQELYLQSLERLGIDPLEHDIRFVEDNWENPSTGSAGLGWEVWLDGMEITQFTYFQQVGGLATSPVTAEVTYGLERLASYIQEVDSVYDIEWAPGVKYGEIFLQPEYEHSKYSFEVSNQDMLLENFEIFEKEAERALAQGLVHPAYDYVLKCSHTFNLLDARGAVSVTERAGYIARIRHLARSVAKTFVAERKKLGFPLLDDASRVALLAED</sequence>
<comment type="catalytic activity">
    <reaction evidence="1">
        <text>tRNA(Gly) + glycine + ATP = glycyl-tRNA(Gly) + AMP + diphosphate</text>
        <dbReference type="Rhea" id="RHEA:16013"/>
        <dbReference type="Rhea" id="RHEA-COMP:9664"/>
        <dbReference type="Rhea" id="RHEA-COMP:9683"/>
        <dbReference type="ChEBI" id="CHEBI:30616"/>
        <dbReference type="ChEBI" id="CHEBI:33019"/>
        <dbReference type="ChEBI" id="CHEBI:57305"/>
        <dbReference type="ChEBI" id="CHEBI:78442"/>
        <dbReference type="ChEBI" id="CHEBI:78522"/>
        <dbReference type="ChEBI" id="CHEBI:456215"/>
        <dbReference type="EC" id="6.1.1.14"/>
    </reaction>
</comment>
<comment type="subunit">
    <text evidence="1">Tetramer of two alpha and two beta subunits.</text>
</comment>
<comment type="subcellular location">
    <subcellularLocation>
        <location evidence="1">Cytoplasm</location>
    </subcellularLocation>
</comment>
<comment type="similarity">
    <text evidence="1">Belongs to the class-II aminoacyl-tRNA synthetase family.</text>
</comment>
<evidence type="ECO:0000255" key="1">
    <source>
        <dbReference type="HAMAP-Rule" id="MF_00254"/>
    </source>
</evidence>
<protein>
    <recommendedName>
        <fullName evidence="1">Glycine--tRNA ligase alpha subunit</fullName>
        <ecNumber evidence="1">6.1.1.14</ecNumber>
    </recommendedName>
    <alternativeName>
        <fullName evidence="1">Glycyl-tRNA synthetase alpha subunit</fullName>
        <shortName evidence="1">GlyRS</shortName>
    </alternativeName>
</protein>
<organism>
    <name type="scientific">Streptococcus equi subsp. equi (strain 4047)</name>
    <dbReference type="NCBI Taxonomy" id="553482"/>
    <lineage>
        <taxon>Bacteria</taxon>
        <taxon>Bacillati</taxon>
        <taxon>Bacillota</taxon>
        <taxon>Bacilli</taxon>
        <taxon>Lactobacillales</taxon>
        <taxon>Streptococcaceae</taxon>
        <taxon>Streptococcus</taxon>
    </lineage>
</organism>
<reference key="1">
    <citation type="journal article" date="2009" name="PLoS Pathog.">
        <title>Genomic evidence for the evolution of Streptococcus equi: host restriction, increased virulence, and genetic exchange with human pathogens.</title>
        <authorList>
            <person name="Holden M.T.G."/>
            <person name="Heather Z."/>
            <person name="Paillot R."/>
            <person name="Steward K.F."/>
            <person name="Webb K."/>
            <person name="Ainslie F."/>
            <person name="Jourdan T."/>
            <person name="Bason N.C."/>
            <person name="Holroyd N.E."/>
            <person name="Mungall K."/>
            <person name="Quail M.A."/>
            <person name="Sanders M."/>
            <person name="Simmonds M."/>
            <person name="Willey D."/>
            <person name="Brooks K."/>
            <person name="Aanensen D.M."/>
            <person name="Spratt B.G."/>
            <person name="Jolley K.A."/>
            <person name="Maiden M.C.J."/>
            <person name="Kehoe M."/>
            <person name="Chanter N."/>
            <person name="Bentley S.D."/>
            <person name="Robinson C."/>
            <person name="Maskell D.J."/>
            <person name="Parkhill J."/>
            <person name="Waller A.S."/>
        </authorList>
    </citation>
    <scope>NUCLEOTIDE SEQUENCE [LARGE SCALE GENOMIC DNA]</scope>
    <source>
        <strain>4047</strain>
    </source>
</reference>
<feature type="chain" id="PRO_1000125556" description="Glycine--tRNA ligase alpha subunit">
    <location>
        <begin position="1"/>
        <end position="303"/>
    </location>
</feature>
<accession>C0M953</accession>
<gene>
    <name evidence="1" type="primary">glyQ</name>
    <name type="ordered locus">SEQ_0543</name>
</gene>
<name>SYGA_STRE4</name>